<feature type="chain" id="PRO_0000058720" description="14-3-3 protein homolog">
    <location>
        <begin position="1"/>
        <end position="262"/>
    </location>
</feature>
<dbReference type="EMBL" id="U24158">
    <property type="protein sequence ID" value="AAB17101.1"/>
    <property type="molecule type" value="mRNA"/>
</dbReference>
<dbReference type="SMR" id="Q99002"/>
<dbReference type="CDD" id="cd11309">
    <property type="entry name" value="14-3-3_fungi"/>
    <property type="match status" value="1"/>
</dbReference>
<dbReference type="FunFam" id="1.20.190.20:FF:000002">
    <property type="entry name" value="14-3-3 protein epsilon"/>
    <property type="match status" value="1"/>
</dbReference>
<dbReference type="Gene3D" id="1.20.190.20">
    <property type="entry name" value="14-3-3 domain"/>
    <property type="match status" value="1"/>
</dbReference>
<dbReference type="InterPro" id="IPR000308">
    <property type="entry name" value="14-3-3"/>
</dbReference>
<dbReference type="InterPro" id="IPR023409">
    <property type="entry name" value="14-3-3_CS"/>
</dbReference>
<dbReference type="InterPro" id="IPR036815">
    <property type="entry name" value="14-3-3_dom_sf"/>
</dbReference>
<dbReference type="InterPro" id="IPR023410">
    <property type="entry name" value="14-3-3_domain"/>
</dbReference>
<dbReference type="PANTHER" id="PTHR18860">
    <property type="entry name" value="14-3-3 PROTEIN"/>
    <property type="match status" value="1"/>
</dbReference>
<dbReference type="Pfam" id="PF00244">
    <property type="entry name" value="14-3-3"/>
    <property type="match status" value="1"/>
</dbReference>
<dbReference type="PIRSF" id="PIRSF000868">
    <property type="entry name" value="14-3-3"/>
    <property type="match status" value="1"/>
</dbReference>
<dbReference type="PRINTS" id="PR00305">
    <property type="entry name" value="1433ZETA"/>
</dbReference>
<dbReference type="SMART" id="SM00101">
    <property type="entry name" value="14_3_3"/>
    <property type="match status" value="1"/>
</dbReference>
<dbReference type="SUPFAM" id="SSF48445">
    <property type="entry name" value="14-3-3 protein"/>
    <property type="match status" value="1"/>
</dbReference>
<dbReference type="PROSITE" id="PS00796">
    <property type="entry name" value="1433_1"/>
    <property type="match status" value="1"/>
</dbReference>
<dbReference type="PROSITE" id="PS00797">
    <property type="entry name" value="1433_2"/>
    <property type="match status" value="1"/>
</dbReference>
<protein>
    <recommendedName>
        <fullName>14-3-3 protein homolog</fullName>
    </recommendedName>
    <alternativeName>
        <fullName>Th1433</fullName>
    </alternativeName>
</protein>
<evidence type="ECO:0000305" key="1"/>
<accession>Q99002</accession>
<organism>
    <name type="scientific">Trichoderma harzianum</name>
    <name type="common">Hypocrea lixii</name>
    <dbReference type="NCBI Taxonomy" id="5544"/>
    <lineage>
        <taxon>Eukaryota</taxon>
        <taxon>Fungi</taxon>
        <taxon>Dikarya</taxon>
        <taxon>Ascomycota</taxon>
        <taxon>Pezizomycotina</taxon>
        <taxon>Sordariomycetes</taxon>
        <taxon>Hypocreomycetidae</taxon>
        <taxon>Hypocreales</taxon>
        <taxon>Hypocreaceae</taxon>
        <taxon>Trichoderma</taxon>
    </lineage>
</organism>
<comment type="developmental stage">
    <text>Highest expression during the active growth period 10-12 hours after germination.</text>
</comment>
<comment type="similarity">
    <text evidence="1">Belongs to the 14-3-3 family.</text>
</comment>
<sequence>MGHEDAVYLAKLAEQAERYEEMVENMKIVASEDRDLTVEERNLLSVAYKNVIGARRASWRIVTSIEQKEESKGNSSQVTLIKEYRQKIENELAKICDDILEVLDQHLIPSAKSGESKVFYHKIKGDYHRYLAEFAIGDRRKDSADKSLEAYKAATEVAQTELPPTHPIRLGLALNFSVFYYEILNAPDQACHLAKQAFDDAIAELDTLSEESYKDSTLIMQLLRDNLTLWTSSEAETPARLMPLLRRRPLLRLPSRRRRAQG</sequence>
<proteinExistence type="evidence at transcript level"/>
<reference key="1">
    <citation type="journal article" date="1996" name="Gene">
        <title>Isolation and characterization of a cDNA from Trichoderma harzianum P1 encoding a 14-3-3 protein homolog.</title>
        <authorList>
            <person name="Klemsdal S.S."/>
            <person name="Hayes C.K."/>
            <person name="Hjeljord L."/>
            <person name="Lorito M."/>
            <person name="Harman G.E."/>
            <person name="Tronsmo A."/>
        </authorList>
    </citation>
    <scope>NUCLEOTIDE SEQUENCE [MRNA]</scope>
    <source>
        <strain>P1</strain>
    </source>
</reference>
<name>1433_TRIHA</name>